<reference key="1">
    <citation type="journal article" date="1998" name="Science">
        <title>Genome sequence of the nematode C. elegans: a platform for investigating biology.</title>
        <authorList>
            <consortium name="The C. elegans sequencing consortium"/>
        </authorList>
    </citation>
    <scope>NUCLEOTIDE SEQUENCE [LARGE SCALE GENOMIC DNA]</scope>
    <source>
        <strain>Bristol N2</strain>
    </source>
</reference>
<keyword id="KW-0963">Cytoplasm</keyword>
<keyword id="KW-0653">Protein transport</keyword>
<keyword id="KW-1185">Reference proteome</keyword>
<keyword id="KW-0813">Transport</keyword>
<feature type="chain" id="PRO_0000194779" description="Probable nuclear transport factor 2">
    <location>
        <begin position="1"/>
        <end position="133"/>
    </location>
</feature>
<feature type="domain" description="NTF2" evidence="2">
    <location>
        <begin position="10"/>
        <end position="128"/>
    </location>
</feature>
<proteinExistence type="inferred from homology"/>
<accession>Q21735</accession>
<organism>
    <name type="scientific">Caenorhabditis elegans</name>
    <dbReference type="NCBI Taxonomy" id="6239"/>
    <lineage>
        <taxon>Eukaryota</taxon>
        <taxon>Metazoa</taxon>
        <taxon>Ecdysozoa</taxon>
        <taxon>Nematoda</taxon>
        <taxon>Chromadorea</taxon>
        <taxon>Rhabditida</taxon>
        <taxon>Rhabditina</taxon>
        <taxon>Rhabditomorpha</taxon>
        <taxon>Rhabditoidea</taxon>
        <taxon>Rhabditidae</taxon>
        <taxon>Peloderinae</taxon>
        <taxon>Caenorhabditis</taxon>
    </lineage>
</organism>
<gene>
    <name type="primary">ran-4</name>
    <name type="ORF">R05D11.3</name>
</gene>
<comment type="function">
    <text evidence="1">Facilitates protein transport into the nucleus. Could be part of a multicomponent system of cytosolic factors that assemble at the pore complex during nuclear import (By similarity).</text>
</comment>
<comment type="subcellular location">
    <subcellularLocation>
        <location evidence="1">Cytoplasm</location>
    </subcellularLocation>
</comment>
<dbReference type="EMBL" id="Z75546">
    <property type="protein sequence ID" value="CAA99890.1"/>
    <property type="molecule type" value="Genomic_DNA"/>
</dbReference>
<dbReference type="PIR" id="T23921">
    <property type="entry name" value="T23921"/>
</dbReference>
<dbReference type="RefSeq" id="NP_492322.1">
    <property type="nucleotide sequence ID" value="NM_059921.5"/>
</dbReference>
<dbReference type="SMR" id="Q21735"/>
<dbReference type="BioGRID" id="38081">
    <property type="interactions" value="15"/>
</dbReference>
<dbReference type="FunCoup" id="Q21735">
    <property type="interactions" value="3052"/>
</dbReference>
<dbReference type="IntAct" id="Q21735">
    <property type="interactions" value="4"/>
</dbReference>
<dbReference type="STRING" id="6239.R05D11.3.1"/>
<dbReference type="PaxDb" id="6239-R05D11.3"/>
<dbReference type="PeptideAtlas" id="Q21735"/>
<dbReference type="EnsemblMetazoa" id="R05D11.3.1">
    <property type="protein sequence ID" value="R05D11.3.1"/>
    <property type="gene ID" value="WBGene00004305"/>
</dbReference>
<dbReference type="GeneID" id="172648"/>
<dbReference type="KEGG" id="cel:CELE_R05D11.3"/>
<dbReference type="UCSC" id="R05D11.3.1">
    <property type="organism name" value="c. elegans"/>
</dbReference>
<dbReference type="AGR" id="WB:WBGene00004305"/>
<dbReference type="CTD" id="172648"/>
<dbReference type="WormBase" id="R05D11.3">
    <property type="protein sequence ID" value="CE06238"/>
    <property type="gene ID" value="WBGene00004305"/>
    <property type="gene designation" value="ran-4"/>
</dbReference>
<dbReference type="eggNOG" id="KOG2104">
    <property type="taxonomic scope" value="Eukaryota"/>
</dbReference>
<dbReference type="GeneTree" id="ENSGT00510000047030"/>
<dbReference type="HOGENOM" id="CLU_131642_1_0_1"/>
<dbReference type="InParanoid" id="Q21735"/>
<dbReference type="OMA" id="QFVEYYY"/>
<dbReference type="OrthoDB" id="6507044at2759"/>
<dbReference type="PhylomeDB" id="Q21735"/>
<dbReference type="PRO" id="PR:Q21735"/>
<dbReference type="Proteomes" id="UP000001940">
    <property type="component" value="Chromosome I"/>
</dbReference>
<dbReference type="Bgee" id="WBGene00004305">
    <property type="expression patterns" value="Expressed in germ line (C elegans) and 4 other cell types or tissues"/>
</dbReference>
<dbReference type="GO" id="GO:0005737">
    <property type="term" value="C:cytoplasm"/>
    <property type="evidence" value="ECO:0007669"/>
    <property type="project" value="UniProtKB-SubCell"/>
</dbReference>
<dbReference type="GO" id="GO:0044613">
    <property type="term" value="C:nuclear pore central transport channel"/>
    <property type="evidence" value="ECO:0000318"/>
    <property type="project" value="GO_Central"/>
</dbReference>
<dbReference type="GO" id="GO:0061608">
    <property type="term" value="F:nuclear import signal receptor activity"/>
    <property type="evidence" value="ECO:0000318"/>
    <property type="project" value="GO_Central"/>
</dbReference>
<dbReference type="GO" id="GO:0006606">
    <property type="term" value="P:protein import into nucleus"/>
    <property type="evidence" value="ECO:0000318"/>
    <property type="project" value="GO_Central"/>
</dbReference>
<dbReference type="CDD" id="cd00780">
    <property type="entry name" value="NTF2"/>
    <property type="match status" value="1"/>
</dbReference>
<dbReference type="FunFam" id="3.10.450.50:FF:000005">
    <property type="entry name" value="Nuclear transport factor 2"/>
    <property type="match status" value="1"/>
</dbReference>
<dbReference type="Gene3D" id="3.10.450.50">
    <property type="match status" value="1"/>
</dbReference>
<dbReference type="InterPro" id="IPR045875">
    <property type="entry name" value="NTF2"/>
</dbReference>
<dbReference type="InterPro" id="IPR032710">
    <property type="entry name" value="NTF2-like_dom_sf"/>
</dbReference>
<dbReference type="InterPro" id="IPR002075">
    <property type="entry name" value="NTF2_dom"/>
</dbReference>
<dbReference type="InterPro" id="IPR018222">
    <property type="entry name" value="Nuclear_transport_factor_2_euk"/>
</dbReference>
<dbReference type="PANTHER" id="PTHR12612">
    <property type="entry name" value="NUCLEAR TRANSPORT FACTOR 2"/>
    <property type="match status" value="1"/>
</dbReference>
<dbReference type="Pfam" id="PF02136">
    <property type="entry name" value="NTF2"/>
    <property type="match status" value="1"/>
</dbReference>
<dbReference type="SUPFAM" id="SSF54427">
    <property type="entry name" value="NTF2-like"/>
    <property type="match status" value="1"/>
</dbReference>
<dbReference type="PROSITE" id="PS50177">
    <property type="entry name" value="NTF2_DOMAIN"/>
    <property type="match status" value="1"/>
</dbReference>
<name>NTF2_CAEEL</name>
<evidence type="ECO:0000250" key="1"/>
<evidence type="ECO:0000255" key="2">
    <source>
        <dbReference type="PROSITE-ProRule" id="PRU00137"/>
    </source>
</evidence>
<sequence>MSFNPDYESVAKAFIQHYYSKFDVGDGMSRAQGLSDLYDPENSYMTFEGQQAKGRDGILQKFTTLGFTKIQRAITVIDSQPLYDGSIQVMVLGQLKTDEDPINPFSQVFILRPNNQGSYFIGNEIFRLDLHNN</sequence>
<protein>
    <recommendedName>
        <fullName>Probable nuclear transport factor 2</fullName>
        <shortName>NTF-2</shortName>
    </recommendedName>
</protein>